<feature type="chain" id="PRO_0000301867" description="CDP-diacylglycerol--glycerol-3-phosphate 3-phosphatidyltransferase">
    <location>
        <begin position="1"/>
        <end position="182"/>
    </location>
</feature>
<feature type="topological domain" description="Cytoplasmic" evidence="1">
    <location>
        <begin position="1"/>
        <end position="12"/>
    </location>
</feature>
<feature type="transmembrane region" description="Helical" evidence="1">
    <location>
        <begin position="13"/>
        <end position="37"/>
    </location>
</feature>
<feature type="topological domain" description="Periplasmic" evidence="1">
    <location>
        <begin position="38"/>
        <end position="60"/>
    </location>
</feature>
<feature type="transmembrane region" description="Helical" evidence="1">
    <location>
        <begin position="61"/>
        <end position="81"/>
    </location>
</feature>
<feature type="topological domain" description="Cytoplasmic" evidence="1">
    <location>
        <begin position="82"/>
        <end position="86"/>
    </location>
</feature>
<feature type="transmembrane region" description="Helical" evidence="1">
    <location>
        <begin position="87"/>
        <end position="107"/>
    </location>
</feature>
<feature type="topological domain" description="Periplasmic" evidence="1">
    <location>
        <begin position="108"/>
        <end position="145"/>
    </location>
</feature>
<feature type="transmembrane region" description="Helical" evidence="1">
    <location>
        <begin position="146"/>
        <end position="168"/>
    </location>
</feature>
<feature type="topological domain" description="Cytoplasmic" evidence="1">
    <location>
        <begin position="169"/>
        <end position="181"/>
    </location>
</feature>
<accession>Q1CHE5</accession>
<accession>C4GUE8</accession>
<evidence type="ECO:0000255" key="1">
    <source>
        <dbReference type="HAMAP-Rule" id="MF_01437"/>
    </source>
</evidence>
<reference key="1">
    <citation type="journal article" date="2006" name="J. Bacteriol.">
        <title>Complete genome sequence of Yersinia pestis strains Antiqua and Nepal516: evidence of gene reduction in an emerging pathogen.</title>
        <authorList>
            <person name="Chain P.S.G."/>
            <person name="Hu P."/>
            <person name="Malfatti S.A."/>
            <person name="Radnedge L."/>
            <person name="Larimer F."/>
            <person name="Vergez L.M."/>
            <person name="Worsham P."/>
            <person name="Chu M.C."/>
            <person name="Andersen G.L."/>
        </authorList>
    </citation>
    <scope>NUCLEOTIDE SEQUENCE [LARGE SCALE GENOMIC DNA]</scope>
    <source>
        <strain>Nepal516</strain>
    </source>
</reference>
<reference key="2">
    <citation type="submission" date="2009-04" db="EMBL/GenBank/DDBJ databases">
        <title>Yersinia pestis Nepal516A whole genome shotgun sequencing project.</title>
        <authorList>
            <person name="Plunkett G. III"/>
            <person name="Anderson B.D."/>
            <person name="Baumler D.J."/>
            <person name="Burland V."/>
            <person name="Cabot E.L."/>
            <person name="Glasner J.D."/>
            <person name="Mau B."/>
            <person name="Neeno-Eckwall E."/>
            <person name="Perna N.T."/>
            <person name="Munk A.C."/>
            <person name="Tapia R."/>
            <person name="Green L.D."/>
            <person name="Rogers Y.C."/>
            <person name="Detter J.C."/>
            <person name="Bruce D.C."/>
            <person name="Brettin T.S."/>
        </authorList>
    </citation>
    <scope>NUCLEOTIDE SEQUENCE [LARGE SCALE GENOMIC DNA]</scope>
    <source>
        <strain>Nepal516</strain>
    </source>
</reference>
<name>PGSA_YERPN</name>
<sequence>MQLNIPTWLTLFRVVLIPFFVLAFYLPFVWAPMVCAIIFVFAAATDWFDGFLARRWKQTTRFGAFLDPVADKVMVAVALVLVAEHYHSWWITLPAATMIAREIIISSLREWMAEIGKRSSVAVSWVGKVKTMAQMGSLVGLLWRPDHNVELASFVLLYIAAVLTFWSMFQYLNAAWSDLLEP</sequence>
<protein>
    <recommendedName>
        <fullName evidence="1">CDP-diacylglycerol--glycerol-3-phosphate 3-phosphatidyltransferase</fullName>
        <ecNumber evidence="1">2.7.8.5</ecNumber>
    </recommendedName>
    <alternativeName>
        <fullName evidence="1">Phosphatidylglycerophosphate synthase</fullName>
        <shortName evidence="1">PGP synthase</shortName>
    </alternativeName>
</protein>
<organism>
    <name type="scientific">Yersinia pestis bv. Antiqua (strain Nepal516)</name>
    <dbReference type="NCBI Taxonomy" id="377628"/>
    <lineage>
        <taxon>Bacteria</taxon>
        <taxon>Pseudomonadati</taxon>
        <taxon>Pseudomonadota</taxon>
        <taxon>Gammaproteobacteria</taxon>
        <taxon>Enterobacterales</taxon>
        <taxon>Yersiniaceae</taxon>
        <taxon>Yersinia</taxon>
    </lineage>
</organism>
<comment type="function">
    <text evidence="1">Catalyzes the conversion of cytidine diphosphate diacylglycerol (CDP-DG) and glycerol 3-phosphate into phosphatidylglycerol. Essential for the synthesis of anionic phospholipids, thereby playing a role in balancing the ratio of zwitterionic and anionic phospholipids, which is thought to be important for normal membrane function.</text>
</comment>
<comment type="catalytic activity">
    <reaction evidence="1">
        <text>a CDP-1,2-diacyl-sn-glycerol + sn-glycerol 3-phosphate = a 1,2-diacyl-sn-glycero-3-phospho-(1'-sn-glycero-3'-phosphate) + CMP + H(+)</text>
        <dbReference type="Rhea" id="RHEA:12593"/>
        <dbReference type="ChEBI" id="CHEBI:15378"/>
        <dbReference type="ChEBI" id="CHEBI:57597"/>
        <dbReference type="ChEBI" id="CHEBI:58332"/>
        <dbReference type="ChEBI" id="CHEBI:60110"/>
        <dbReference type="ChEBI" id="CHEBI:60377"/>
        <dbReference type="EC" id="2.7.8.5"/>
    </reaction>
</comment>
<comment type="pathway">
    <text evidence="1">Phospholipid metabolism; phosphatidylglycerol biosynthesis; phosphatidylglycerol from CDP-diacylglycerol: step 1/2.</text>
</comment>
<comment type="subcellular location">
    <subcellularLocation>
        <location evidence="1">Cell inner membrane</location>
        <topology evidence="1">Multi-pass membrane protein</topology>
    </subcellularLocation>
</comment>
<comment type="similarity">
    <text evidence="1">Belongs to the CDP-alcohol phosphatidyltransferase class-I family.</text>
</comment>
<keyword id="KW-0997">Cell inner membrane</keyword>
<keyword id="KW-1003">Cell membrane</keyword>
<keyword id="KW-0444">Lipid biosynthesis</keyword>
<keyword id="KW-0443">Lipid metabolism</keyword>
<keyword id="KW-0472">Membrane</keyword>
<keyword id="KW-0594">Phospholipid biosynthesis</keyword>
<keyword id="KW-1208">Phospholipid metabolism</keyword>
<keyword id="KW-0808">Transferase</keyword>
<keyword id="KW-0812">Transmembrane</keyword>
<keyword id="KW-1133">Transmembrane helix</keyword>
<dbReference type="EC" id="2.7.8.5" evidence="1"/>
<dbReference type="EMBL" id="CP000305">
    <property type="protein sequence ID" value="ABG18585.1"/>
    <property type="molecule type" value="Genomic_DNA"/>
</dbReference>
<dbReference type="EMBL" id="ACNQ01000013">
    <property type="protein sequence ID" value="EEO76335.1"/>
    <property type="molecule type" value="Genomic_DNA"/>
</dbReference>
<dbReference type="RefSeq" id="WP_002220475.1">
    <property type="nucleotide sequence ID" value="NZ_ACNQ01000013.1"/>
</dbReference>
<dbReference type="SMR" id="Q1CHE5"/>
<dbReference type="GeneID" id="96665312"/>
<dbReference type="KEGG" id="ypn:YPN_2257"/>
<dbReference type="HOGENOM" id="CLU_051314_2_1_6"/>
<dbReference type="UniPathway" id="UPA00084">
    <property type="reaction ID" value="UER00503"/>
</dbReference>
<dbReference type="Proteomes" id="UP000008936">
    <property type="component" value="Chromosome"/>
</dbReference>
<dbReference type="GO" id="GO:0005886">
    <property type="term" value="C:plasma membrane"/>
    <property type="evidence" value="ECO:0007669"/>
    <property type="project" value="UniProtKB-SubCell"/>
</dbReference>
<dbReference type="GO" id="GO:0008444">
    <property type="term" value="F:CDP-diacylglycerol-glycerol-3-phosphate 3-phosphatidyltransferase activity"/>
    <property type="evidence" value="ECO:0007669"/>
    <property type="project" value="UniProtKB-UniRule"/>
</dbReference>
<dbReference type="GO" id="GO:0006655">
    <property type="term" value="P:phosphatidylglycerol biosynthetic process"/>
    <property type="evidence" value="ECO:0007669"/>
    <property type="project" value="UniProtKB-UniRule"/>
</dbReference>
<dbReference type="FunFam" id="1.20.120.1760:FF:000001">
    <property type="entry name" value="CDP-diacylglycerol--glycerol-3-phosphate 3-phosphatidyltransferase"/>
    <property type="match status" value="1"/>
</dbReference>
<dbReference type="Gene3D" id="1.20.120.1760">
    <property type="match status" value="1"/>
</dbReference>
<dbReference type="HAMAP" id="MF_01437">
    <property type="entry name" value="PgsA"/>
    <property type="match status" value="1"/>
</dbReference>
<dbReference type="InterPro" id="IPR050324">
    <property type="entry name" value="CDP-alcohol_PTase-I"/>
</dbReference>
<dbReference type="InterPro" id="IPR000462">
    <property type="entry name" value="CDP-OH_P_trans"/>
</dbReference>
<dbReference type="InterPro" id="IPR043130">
    <property type="entry name" value="CDP-OH_PTrfase_TM_dom"/>
</dbReference>
<dbReference type="InterPro" id="IPR048254">
    <property type="entry name" value="CDP_ALCOHOL_P_TRANSF_CS"/>
</dbReference>
<dbReference type="InterPro" id="IPR023762">
    <property type="entry name" value="PGP_synthase_bac"/>
</dbReference>
<dbReference type="InterPro" id="IPR004570">
    <property type="entry name" value="Phosphatidylglycerol_P_synth"/>
</dbReference>
<dbReference type="NCBIfam" id="TIGR00560">
    <property type="entry name" value="pgsA"/>
    <property type="match status" value="1"/>
</dbReference>
<dbReference type="NCBIfam" id="NF008090">
    <property type="entry name" value="PRK10832.1"/>
    <property type="match status" value="1"/>
</dbReference>
<dbReference type="PANTHER" id="PTHR14269:SF62">
    <property type="entry name" value="CDP-DIACYLGLYCEROL--GLYCEROL-3-PHOSPHATE 3-PHOSPHATIDYLTRANSFERASE 1, CHLOROPLASTIC"/>
    <property type="match status" value="1"/>
</dbReference>
<dbReference type="PANTHER" id="PTHR14269">
    <property type="entry name" value="CDP-DIACYLGLYCEROL--GLYCEROL-3-PHOSPHATE 3-PHOSPHATIDYLTRANSFERASE-RELATED"/>
    <property type="match status" value="1"/>
</dbReference>
<dbReference type="Pfam" id="PF01066">
    <property type="entry name" value="CDP-OH_P_transf"/>
    <property type="match status" value="1"/>
</dbReference>
<dbReference type="PIRSF" id="PIRSF000847">
    <property type="entry name" value="Phos_ph_gly_syn"/>
    <property type="match status" value="1"/>
</dbReference>
<dbReference type="PROSITE" id="PS00379">
    <property type="entry name" value="CDP_ALCOHOL_P_TRANSF"/>
    <property type="match status" value="1"/>
</dbReference>
<gene>
    <name evidence="1" type="primary">pgsA</name>
    <name type="ordered locus">YPN_2257</name>
    <name type="ORF">YP516_2536</name>
</gene>
<proteinExistence type="inferred from homology"/>